<reference key="1">
    <citation type="journal article" date="1994" name="Hum. Mol. Genet.">
        <title>Molecular basis of essential fructosuria: molecular cloning and mutational analysis of human ketohexokinase (fructokinase).</title>
        <authorList>
            <person name="Bonthron D.T."/>
            <person name="Brady N."/>
            <person name="Donaldson I.A."/>
            <person name="Steinmann B."/>
        </authorList>
    </citation>
    <scope>NUCLEOTIDE SEQUENCE [MRNA]</scope>
    <scope>VARIANTS FRUCT ARG-40 AND THR-43</scope>
    <scope>VARIANT ILE-49</scope>
</reference>
<reference key="2">
    <citation type="submission" date="2004-06" db="EMBL/GenBank/DDBJ databases">
        <title>Cloning of human full open reading frames in Gateway(TM) system entry vector (pDONR201).</title>
        <authorList>
            <person name="Ebert L."/>
            <person name="Schick M."/>
            <person name="Neubert P."/>
            <person name="Schatten R."/>
            <person name="Henze S."/>
            <person name="Korn B."/>
        </authorList>
    </citation>
    <scope>NUCLEOTIDE SEQUENCE [LARGE SCALE MRNA]</scope>
</reference>
<reference key="3">
    <citation type="journal article" date="2005" name="Nature">
        <title>Generation and annotation of the DNA sequences of human chromosomes 2 and 4.</title>
        <authorList>
            <person name="Hillier L.W."/>
            <person name="Graves T.A."/>
            <person name="Fulton R.S."/>
            <person name="Fulton L.A."/>
            <person name="Pepin K.H."/>
            <person name="Minx P."/>
            <person name="Wagner-McPherson C."/>
            <person name="Layman D."/>
            <person name="Wylie K."/>
            <person name="Sekhon M."/>
            <person name="Becker M.C."/>
            <person name="Fewell G.A."/>
            <person name="Delehaunty K.D."/>
            <person name="Miner T.L."/>
            <person name="Nash W.E."/>
            <person name="Kremitzki C."/>
            <person name="Oddy L."/>
            <person name="Du H."/>
            <person name="Sun H."/>
            <person name="Bradshaw-Cordum H."/>
            <person name="Ali J."/>
            <person name="Carter J."/>
            <person name="Cordes M."/>
            <person name="Harris A."/>
            <person name="Isak A."/>
            <person name="van Brunt A."/>
            <person name="Nguyen C."/>
            <person name="Du F."/>
            <person name="Courtney L."/>
            <person name="Kalicki J."/>
            <person name="Ozersky P."/>
            <person name="Abbott S."/>
            <person name="Armstrong J."/>
            <person name="Belter E.A."/>
            <person name="Caruso L."/>
            <person name="Cedroni M."/>
            <person name="Cotton M."/>
            <person name="Davidson T."/>
            <person name="Desai A."/>
            <person name="Elliott G."/>
            <person name="Erb T."/>
            <person name="Fronick C."/>
            <person name="Gaige T."/>
            <person name="Haakenson W."/>
            <person name="Haglund K."/>
            <person name="Holmes A."/>
            <person name="Harkins R."/>
            <person name="Kim K."/>
            <person name="Kruchowski S.S."/>
            <person name="Strong C.M."/>
            <person name="Grewal N."/>
            <person name="Goyea E."/>
            <person name="Hou S."/>
            <person name="Levy A."/>
            <person name="Martinka S."/>
            <person name="Mead K."/>
            <person name="McLellan M.D."/>
            <person name="Meyer R."/>
            <person name="Randall-Maher J."/>
            <person name="Tomlinson C."/>
            <person name="Dauphin-Kohlberg S."/>
            <person name="Kozlowicz-Reilly A."/>
            <person name="Shah N."/>
            <person name="Swearengen-Shahid S."/>
            <person name="Snider J."/>
            <person name="Strong J.T."/>
            <person name="Thompson J."/>
            <person name="Yoakum M."/>
            <person name="Leonard S."/>
            <person name="Pearman C."/>
            <person name="Trani L."/>
            <person name="Radionenko M."/>
            <person name="Waligorski J.E."/>
            <person name="Wang C."/>
            <person name="Rock S.M."/>
            <person name="Tin-Wollam A.-M."/>
            <person name="Maupin R."/>
            <person name="Latreille P."/>
            <person name="Wendl M.C."/>
            <person name="Yang S.-P."/>
            <person name="Pohl C."/>
            <person name="Wallis J.W."/>
            <person name="Spieth J."/>
            <person name="Bieri T.A."/>
            <person name="Berkowicz N."/>
            <person name="Nelson J.O."/>
            <person name="Osborne J."/>
            <person name="Ding L."/>
            <person name="Meyer R."/>
            <person name="Sabo A."/>
            <person name="Shotland Y."/>
            <person name="Sinha P."/>
            <person name="Wohldmann P.E."/>
            <person name="Cook L.L."/>
            <person name="Hickenbotham M.T."/>
            <person name="Eldred J."/>
            <person name="Williams D."/>
            <person name="Jones T.A."/>
            <person name="She X."/>
            <person name="Ciccarelli F.D."/>
            <person name="Izaurralde E."/>
            <person name="Taylor J."/>
            <person name="Schmutz J."/>
            <person name="Myers R.M."/>
            <person name="Cox D.R."/>
            <person name="Huang X."/>
            <person name="McPherson J.D."/>
            <person name="Mardis E.R."/>
            <person name="Clifton S.W."/>
            <person name="Warren W.C."/>
            <person name="Chinwalla A.T."/>
            <person name="Eddy S.R."/>
            <person name="Marra M.A."/>
            <person name="Ovcharenko I."/>
            <person name="Furey T.S."/>
            <person name="Miller W."/>
            <person name="Eichler E.E."/>
            <person name="Bork P."/>
            <person name="Suyama M."/>
            <person name="Torrents D."/>
            <person name="Waterston R.H."/>
            <person name="Wilson R.K."/>
        </authorList>
    </citation>
    <scope>NUCLEOTIDE SEQUENCE [LARGE SCALE GENOMIC DNA]</scope>
</reference>
<reference key="4">
    <citation type="submission" date="2005-09" db="EMBL/GenBank/DDBJ databases">
        <authorList>
            <person name="Mural R.J."/>
            <person name="Istrail S."/>
            <person name="Sutton G."/>
            <person name="Florea L."/>
            <person name="Halpern A.L."/>
            <person name="Mobarry C.M."/>
            <person name="Lippert R."/>
            <person name="Walenz B."/>
            <person name="Shatkay H."/>
            <person name="Dew I."/>
            <person name="Miller J.R."/>
            <person name="Flanigan M.J."/>
            <person name="Edwards N.J."/>
            <person name="Bolanos R."/>
            <person name="Fasulo D."/>
            <person name="Halldorsson B.V."/>
            <person name="Hannenhalli S."/>
            <person name="Turner R."/>
            <person name="Yooseph S."/>
            <person name="Lu F."/>
            <person name="Nusskern D.R."/>
            <person name="Shue B.C."/>
            <person name="Zheng X.H."/>
            <person name="Zhong F."/>
            <person name="Delcher A.L."/>
            <person name="Huson D.H."/>
            <person name="Kravitz S.A."/>
            <person name="Mouchard L."/>
            <person name="Reinert K."/>
            <person name="Remington K.A."/>
            <person name="Clark A.G."/>
            <person name="Waterman M.S."/>
            <person name="Eichler E.E."/>
            <person name="Adams M.D."/>
            <person name="Hunkapiller M.W."/>
            <person name="Myers E.W."/>
            <person name="Venter J.C."/>
        </authorList>
    </citation>
    <scope>NUCLEOTIDE SEQUENCE [LARGE SCALE GENOMIC DNA]</scope>
</reference>
<reference key="5">
    <citation type="journal article" date="2004" name="Genome Res.">
        <title>The status, quality, and expansion of the NIH full-length cDNA project: the Mammalian Gene Collection (MGC).</title>
        <authorList>
            <consortium name="The MGC Project Team"/>
        </authorList>
    </citation>
    <scope>NUCLEOTIDE SEQUENCE [LARGE SCALE MRNA]</scope>
    <source>
        <tissue>Lung</tissue>
    </source>
</reference>
<reference key="6">
    <citation type="journal article" date="1998" name="Eur. J. Biochem.">
        <title>Structure and alternative splicing of the ketohexokinase gene.</title>
        <authorList>
            <person name="Hayward B.E."/>
            <person name="Bonthron D.T."/>
        </authorList>
    </citation>
    <scope>NUCLEOTIDE SEQUENCE [GENOMIC DNA] OF 1-26 AND 71-298</scope>
    <scope>ALTERNATIVE SPLICING</scope>
    <scope>TISSUE SPECIFICITY</scope>
</reference>
<reference key="7">
    <citation type="journal article" date="2014" name="J. Proteomics">
        <title>An enzyme assisted RP-RPLC approach for in-depth analysis of human liver phosphoproteome.</title>
        <authorList>
            <person name="Bian Y."/>
            <person name="Song C."/>
            <person name="Cheng K."/>
            <person name="Dong M."/>
            <person name="Wang F."/>
            <person name="Huang J."/>
            <person name="Sun D."/>
            <person name="Wang L."/>
            <person name="Ye M."/>
            <person name="Zou H."/>
        </authorList>
    </citation>
    <scope>IDENTIFICATION BY MASS SPECTROMETRY [LARGE SCALE ANALYSIS]</scope>
    <source>
        <tissue>Liver</tissue>
    </source>
</reference>
<reference evidence="8 9" key="8">
    <citation type="journal article" date="2009" name="Acta Crystallogr. D">
        <title>Structures of alternatively spliced isoforms of human ketohexokinase.</title>
        <authorList>
            <person name="Trinh C.H."/>
            <person name="Asipu A."/>
            <person name="Bonthron D.T."/>
            <person name="Phillips S.E."/>
        </authorList>
    </citation>
    <scope>X-RAY CRYSTALLOGRAPHY (2.10 ANGSTROMS) IN COMPLEX WITH BETA-D-FRUCTOSE AND AMP-PNP</scope>
    <scope>X-RAY CRYSTALLOGRAPHY (1.86 ANGSTROMS) OF ISOFORM A</scope>
    <scope>SUBUNIT</scope>
    <scope>SUBSTRATE-BINDING SITES</scope>
</reference>
<reference key="9">
    <citation type="journal article" date="2003" name="Diabetes">
        <title>Properties of normal and mutant recombinant human ketohexokinases and implications for the pathogenesis of essential fructosuria.</title>
        <authorList>
            <person name="Asipu A."/>
            <person name="Hayward B.E."/>
            <person name="O'Reilly J."/>
            <person name="Bonthron D.T."/>
        </authorList>
    </citation>
    <scope>CHARACTERIZATION OF VARIANTS FRUCT ARG-40 AND THR-43</scope>
    <scope>FUNCTION</scope>
    <scope>BIOPHYSICOCHEMICAL PROPERTIES</scope>
    <scope>CATALYTIC ACTIVITY</scope>
</reference>
<proteinExistence type="evidence at protein level"/>
<accession>P50053</accession>
<accession>Q6IBK2</accession>
<accession>Q99532</accession>
<accession>Q9BRJ3</accession>
<accession>Q9UMN1</accession>
<evidence type="ECO:0000269" key="1">
    <source>
    </source>
</evidence>
<evidence type="ECO:0000269" key="2">
    <source>
    </source>
</evidence>
<evidence type="ECO:0000269" key="3">
    <source>
    </source>
</evidence>
<evidence type="ECO:0000269" key="4">
    <source>
    </source>
</evidence>
<evidence type="ECO:0000305" key="5"/>
<evidence type="ECO:0000305" key="6">
    <source>
    </source>
</evidence>
<evidence type="ECO:0000312" key="7">
    <source>
        <dbReference type="HGNC" id="HGNC:6315"/>
    </source>
</evidence>
<evidence type="ECO:0007744" key="8">
    <source>
        <dbReference type="PDB" id="2HQQ"/>
    </source>
</evidence>
<evidence type="ECO:0007744" key="9">
    <source>
        <dbReference type="PDB" id="2HW1"/>
    </source>
</evidence>
<evidence type="ECO:0007829" key="10">
    <source>
        <dbReference type="PDB" id="2HLZ"/>
    </source>
</evidence>
<evidence type="ECO:0007829" key="11">
    <source>
        <dbReference type="PDB" id="2HQQ"/>
    </source>
</evidence>
<protein>
    <recommendedName>
        <fullName evidence="7">Ketohexokinase</fullName>
        <ecNumber evidence="1">2.7.1.3</ecNumber>
    </recommendedName>
    <alternativeName>
        <fullName>Hepatic fructokinase</fullName>
    </alternativeName>
</protein>
<organism>
    <name type="scientific">Homo sapiens</name>
    <name type="common">Human</name>
    <dbReference type="NCBI Taxonomy" id="9606"/>
    <lineage>
        <taxon>Eukaryota</taxon>
        <taxon>Metazoa</taxon>
        <taxon>Chordata</taxon>
        <taxon>Craniata</taxon>
        <taxon>Vertebrata</taxon>
        <taxon>Euteleostomi</taxon>
        <taxon>Mammalia</taxon>
        <taxon>Eutheria</taxon>
        <taxon>Euarchontoglires</taxon>
        <taxon>Primates</taxon>
        <taxon>Haplorrhini</taxon>
        <taxon>Catarrhini</taxon>
        <taxon>Hominidae</taxon>
        <taxon>Homo</taxon>
    </lineage>
</organism>
<name>KHK_HUMAN</name>
<keyword id="KW-0002">3D-structure</keyword>
<keyword id="KW-0025">Alternative splicing</keyword>
<keyword id="KW-0067">ATP-binding</keyword>
<keyword id="KW-0119">Carbohydrate metabolism</keyword>
<keyword id="KW-0225">Disease variant</keyword>
<keyword id="KW-0418">Kinase</keyword>
<keyword id="KW-0547">Nucleotide-binding</keyword>
<keyword id="KW-1267">Proteomics identification</keyword>
<keyword id="KW-1185">Reference proteome</keyword>
<keyword id="KW-0808">Transferase</keyword>
<feature type="chain" id="PRO_0000080088" description="Ketohexokinase">
    <location>
        <begin position="1"/>
        <end position="298"/>
    </location>
</feature>
<feature type="binding site" evidence="2 9">
    <location>
        <position position="15"/>
    </location>
    <ligand>
        <name>beta-D-fructose</name>
        <dbReference type="ChEBI" id="CHEBI:28645"/>
    </ligand>
</feature>
<feature type="binding site" evidence="9">
    <location>
        <position position="41"/>
    </location>
    <ligand>
        <name>beta-D-fructose</name>
        <dbReference type="ChEBI" id="CHEBI:28645"/>
    </ligand>
</feature>
<feature type="binding site" evidence="9">
    <location>
        <position position="42"/>
    </location>
    <ligand>
        <name>beta-D-fructose</name>
        <dbReference type="ChEBI" id="CHEBI:28645"/>
    </ligand>
</feature>
<feature type="binding site" evidence="9">
    <location>
        <position position="45"/>
    </location>
    <ligand>
        <name>beta-D-fructose</name>
        <dbReference type="ChEBI" id="CHEBI:28645"/>
    </ligand>
</feature>
<feature type="binding site" evidence="6 9">
    <location>
        <position position="108"/>
    </location>
    <ligand>
        <name>ATP</name>
        <dbReference type="ChEBI" id="CHEBI:30616"/>
    </ligand>
</feature>
<feature type="binding site" evidence="6 9">
    <location>
        <begin position="226"/>
        <end position="229"/>
    </location>
    <ligand>
        <name>ATP</name>
        <dbReference type="ChEBI" id="CHEBI:30616"/>
    </ligand>
</feature>
<feature type="binding site" evidence="6 9">
    <location>
        <begin position="255"/>
        <end position="258"/>
    </location>
    <ligand>
        <name>ATP</name>
        <dbReference type="ChEBI" id="CHEBI:30616"/>
    </ligand>
</feature>
<feature type="binding site" evidence="9">
    <location>
        <position position="258"/>
    </location>
    <ligand>
        <name>beta-D-fructose</name>
        <dbReference type="ChEBI" id="CHEBI:28645"/>
    </ligand>
</feature>
<feature type="splice variant" id="VSP_004669" description="In isoform A." evidence="5">
    <original>LVADFRRRGVDVSQVAWQSKGDTPSSCCIINNSNGNRTIVLHDT</original>
    <variation>VLDDLRRYSVDLRYTVFQTTGSVPIATVIINEASGSRTILYYDR</variation>
    <location>
        <begin position="72"/>
        <end position="115"/>
    </location>
</feature>
<feature type="sequence variant" id="VAR_006072" description="In FRUCT; loss of ketohexokinase function; insoluble; dbSNP:rs104893643." evidence="1 3">
    <original>G</original>
    <variation>R</variation>
    <location>
        <position position="40"/>
    </location>
</feature>
<feature type="sequence variant" id="VAR_006073" description="In FRUCT; no effect on ketohexokinase function; decreases enzyme activity but no effect in substrate affinity; decreases thermal stability; dbSNP:rs104893644." evidence="1 3">
    <original>A</original>
    <variation>T</variation>
    <location>
        <position position="43"/>
    </location>
</feature>
<feature type="sequence variant" id="VAR_006074" description="In dbSNP:rs2304681." evidence="3">
    <original>V</original>
    <variation>I</variation>
    <location>
        <position position="49"/>
    </location>
</feature>
<feature type="strand" evidence="10">
    <location>
        <begin position="5"/>
        <end position="10"/>
    </location>
</feature>
<feature type="strand" evidence="10">
    <location>
        <begin position="13"/>
        <end position="22"/>
    </location>
</feature>
<feature type="strand" evidence="10">
    <location>
        <begin position="29"/>
        <end position="31"/>
    </location>
</feature>
<feature type="strand" evidence="10">
    <location>
        <begin position="33"/>
        <end position="41"/>
    </location>
</feature>
<feature type="helix" evidence="10">
    <location>
        <begin position="42"/>
        <end position="53"/>
    </location>
</feature>
<feature type="strand" evidence="10">
    <location>
        <begin position="57"/>
        <end position="63"/>
    </location>
</feature>
<feature type="helix" evidence="10">
    <location>
        <begin position="67"/>
        <end position="78"/>
    </location>
</feature>
<feature type="strand" evidence="10">
    <location>
        <begin position="86"/>
        <end position="88"/>
    </location>
</feature>
<feature type="strand" evidence="11">
    <location>
        <begin position="90"/>
        <end position="92"/>
    </location>
</feature>
<feature type="strand" evidence="10">
    <location>
        <begin position="96"/>
        <end position="102"/>
    </location>
</feature>
<feature type="turn" evidence="10">
    <location>
        <begin position="103"/>
        <end position="105"/>
    </location>
</feature>
<feature type="strand" evidence="10">
    <location>
        <begin position="108"/>
        <end position="113"/>
    </location>
</feature>
<feature type="helix" evidence="10">
    <location>
        <begin position="122"/>
        <end position="126"/>
    </location>
</feature>
<feature type="helix" evidence="10">
    <location>
        <begin position="130"/>
        <end position="132"/>
    </location>
</feature>
<feature type="strand" evidence="10">
    <location>
        <begin position="133"/>
        <end position="139"/>
    </location>
</feature>
<feature type="helix" evidence="10">
    <location>
        <begin position="143"/>
        <end position="157"/>
    </location>
</feature>
<feature type="helix" evidence="10">
    <location>
        <begin position="162"/>
        <end position="164"/>
    </location>
</feature>
<feature type="strand" evidence="10">
    <location>
        <begin position="167"/>
        <end position="172"/>
    </location>
</feature>
<feature type="helix" evidence="10">
    <location>
        <begin position="177"/>
        <end position="184"/>
    </location>
</feature>
<feature type="strand" evidence="10">
    <location>
        <begin position="185"/>
        <end position="191"/>
    </location>
</feature>
<feature type="helix" evidence="10">
    <location>
        <begin position="193"/>
        <end position="198"/>
    </location>
</feature>
<feature type="helix" evidence="10">
    <location>
        <begin position="204"/>
        <end position="211"/>
    </location>
</feature>
<feature type="helix" evidence="10">
    <location>
        <begin position="212"/>
        <end position="214"/>
    </location>
</feature>
<feature type="strand" evidence="10">
    <location>
        <begin position="220"/>
        <end position="224"/>
    </location>
</feature>
<feature type="helix" evidence="10">
    <location>
        <begin position="226"/>
        <end position="228"/>
    </location>
</feature>
<feature type="strand" evidence="10">
    <location>
        <begin position="230"/>
        <end position="233"/>
    </location>
</feature>
<feature type="strand" evidence="10">
    <location>
        <begin position="239"/>
        <end position="242"/>
    </location>
</feature>
<feature type="helix" evidence="10">
    <location>
        <begin position="256"/>
        <end position="269"/>
    </location>
</feature>
<feature type="helix" evidence="10">
    <location>
        <begin position="274"/>
        <end position="289"/>
    </location>
</feature>
<feature type="strand" evidence="10">
    <location>
        <begin position="291"/>
        <end position="294"/>
    </location>
</feature>
<feature type="helix" evidence="10">
    <location>
        <begin position="295"/>
        <end position="297"/>
    </location>
</feature>
<dbReference type="EC" id="2.7.1.3" evidence="1"/>
<dbReference type="EMBL" id="X78678">
    <property type="protein sequence ID" value="CAA55347.1"/>
    <property type="molecule type" value="mRNA"/>
</dbReference>
<dbReference type="EMBL" id="X78677">
    <property type="protein sequence ID" value="CAA55346.1"/>
    <property type="molecule type" value="mRNA"/>
</dbReference>
<dbReference type="EMBL" id="CR456801">
    <property type="protein sequence ID" value="CAG33082.1"/>
    <property type="molecule type" value="mRNA"/>
</dbReference>
<dbReference type="EMBL" id="AC013403">
    <property type="protein sequence ID" value="AAX93167.1"/>
    <property type="molecule type" value="Genomic_DNA"/>
</dbReference>
<dbReference type="EMBL" id="CH471053">
    <property type="protein sequence ID" value="EAX00643.1"/>
    <property type="molecule type" value="Genomic_DNA"/>
</dbReference>
<dbReference type="EMBL" id="BC006233">
    <property type="protein sequence ID" value="AAH06233.1"/>
    <property type="molecule type" value="mRNA"/>
</dbReference>
<dbReference type="EMBL" id="Y09336">
    <property type="protein sequence ID" value="CAA70516.1"/>
    <property type="molecule type" value="Genomic_DNA"/>
</dbReference>
<dbReference type="EMBL" id="Y09341">
    <property type="protein sequence ID" value="CAA70522.1"/>
    <property type="molecule type" value="Genomic_DNA"/>
</dbReference>
<dbReference type="EMBL" id="Y09341">
    <property type="protein sequence ID" value="CAA70523.1"/>
    <property type="molecule type" value="Genomic_DNA"/>
</dbReference>
<dbReference type="EMBL" id="Y09340">
    <property type="protein sequence ID" value="CAA70521.1"/>
    <property type="molecule type" value="Genomic_DNA"/>
</dbReference>
<dbReference type="EMBL" id="AJ005168">
    <property type="protein sequence ID" value="CAA06409.1"/>
    <property type="molecule type" value="Genomic_DNA"/>
</dbReference>
<dbReference type="CCDS" id="CCDS1734.1">
    <molecule id="P50053-2"/>
</dbReference>
<dbReference type="CCDS" id="CCDS1735.1">
    <molecule id="P50053-1"/>
</dbReference>
<dbReference type="RefSeq" id="NP_000212.1">
    <molecule id="P50053-2"/>
    <property type="nucleotide sequence ID" value="NM_000221.3"/>
</dbReference>
<dbReference type="RefSeq" id="NP_006479.1">
    <molecule id="P50053-1"/>
    <property type="nucleotide sequence ID" value="NM_006488.3"/>
</dbReference>
<dbReference type="PDB" id="2HLZ">
    <property type="method" value="X-ray"/>
    <property type="resolution" value="1.85 A"/>
    <property type="chains" value="A/B/C/D=5-298"/>
</dbReference>
<dbReference type="PDB" id="2HQQ">
    <property type="method" value="X-ray"/>
    <property type="resolution" value="1.86 A"/>
    <property type="chains" value="A=1-298"/>
</dbReference>
<dbReference type="PDB" id="2HW1">
    <property type="method" value="X-ray"/>
    <property type="resolution" value="2.10 A"/>
    <property type="chains" value="A=1-298"/>
</dbReference>
<dbReference type="PDB" id="3B3L">
    <property type="method" value="X-ray"/>
    <property type="resolution" value="2.90 A"/>
    <property type="chains" value="A/B/C/D=1-298"/>
</dbReference>
<dbReference type="PDB" id="3NBV">
    <property type="method" value="X-ray"/>
    <property type="resolution" value="2.30 A"/>
    <property type="chains" value="A/B=5-298"/>
</dbReference>
<dbReference type="PDB" id="3NBW">
    <property type="method" value="X-ray"/>
    <property type="resolution" value="2.34 A"/>
    <property type="chains" value="A/B=5-298"/>
</dbReference>
<dbReference type="PDB" id="3NC2">
    <property type="method" value="X-ray"/>
    <property type="resolution" value="2.50 A"/>
    <property type="chains" value="A/B=5-298"/>
</dbReference>
<dbReference type="PDB" id="3NC9">
    <property type="method" value="X-ray"/>
    <property type="resolution" value="2.40 A"/>
    <property type="chains" value="A/B=5-298"/>
</dbReference>
<dbReference type="PDB" id="3NCA">
    <property type="method" value="X-ray"/>
    <property type="resolution" value="2.60 A"/>
    <property type="chains" value="A/B=5-298"/>
</dbReference>
<dbReference type="PDB" id="3Q92">
    <property type="method" value="X-ray"/>
    <property type="resolution" value="2.80 A"/>
    <property type="chains" value="A/B=5-298"/>
</dbReference>
<dbReference type="PDB" id="3QA2">
    <property type="method" value="X-ray"/>
    <property type="resolution" value="2.52 A"/>
    <property type="chains" value="A/B=5-298"/>
</dbReference>
<dbReference type="PDB" id="3QAI">
    <property type="method" value="X-ray"/>
    <property type="resolution" value="2.70 A"/>
    <property type="chains" value="A/B=5-298"/>
</dbReference>
<dbReference type="PDB" id="3RO4">
    <property type="method" value="X-ray"/>
    <property type="resolution" value="2.60 A"/>
    <property type="chains" value="A/B=5-298"/>
</dbReference>
<dbReference type="PDB" id="5WBM">
    <property type="method" value="X-ray"/>
    <property type="resolution" value="2.16 A"/>
    <property type="chains" value="A/B=5-298"/>
</dbReference>
<dbReference type="PDB" id="5WBO">
    <property type="method" value="X-ray"/>
    <property type="resolution" value="2.25 A"/>
    <property type="chains" value="A/B=5-298"/>
</dbReference>
<dbReference type="PDB" id="5WBP">
    <property type="method" value="X-ray"/>
    <property type="resolution" value="2.74 A"/>
    <property type="chains" value="A/B=5-298"/>
</dbReference>
<dbReference type="PDB" id="5WBQ">
    <property type="method" value="X-ray"/>
    <property type="resolution" value="2.40 A"/>
    <property type="chains" value="A/B=5-298"/>
</dbReference>
<dbReference type="PDB" id="5WBR">
    <property type="method" value="X-ray"/>
    <property type="resolution" value="2.58 A"/>
    <property type="chains" value="A/B=5-298"/>
</dbReference>
<dbReference type="PDB" id="5WBZ">
    <property type="method" value="X-ray"/>
    <property type="resolution" value="2.40 A"/>
    <property type="chains" value="A/B=5-298"/>
</dbReference>
<dbReference type="PDB" id="6UL7">
    <property type="method" value="X-ray"/>
    <property type="resolution" value="2.30 A"/>
    <property type="chains" value="A=1-298"/>
</dbReference>
<dbReference type="PDB" id="6W0N">
    <property type="method" value="X-ray"/>
    <property type="resolution" value="2.41 A"/>
    <property type="chains" value="A/B=5-298"/>
</dbReference>
<dbReference type="PDB" id="6W0W">
    <property type="method" value="X-ray"/>
    <property type="resolution" value="2.80 A"/>
    <property type="chains" value="A/B=5-298"/>
</dbReference>
<dbReference type="PDB" id="6W0X">
    <property type="method" value="X-ray"/>
    <property type="resolution" value="2.38 A"/>
    <property type="chains" value="A/B=5-298"/>
</dbReference>
<dbReference type="PDB" id="6W0Y">
    <property type="method" value="X-ray"/>
    <property type="resolution" value="2.54 A"/>
    <property type="chains" value="A/B=5-298"/>
</dbReference>
<dbReference type="PDB" id="6W0Z">
    <property type="method" value="X-ray"/>
    <property type="resolution" value="2.30 A"/>
    <property type="chains" value="A/B=5-298"/>
</dbReference>
<dbReference type="PDB" id="8OME">
    <property type="method" value="X-ray"/>
    <property type="resolution" value="2.00 A"/>
    <property type="chains" value="A/B/C/D=1-298"/>
</dbReference>
<dbReference type="PDB" id="8OMF">
    <property type="method" value="X-ray"/>
    <property type="resolution" value="2.14 A"/>
    <property type="chains" value="A/B=5-298"/>
</dbReference>
<dbReference type="PDB" id="8OMJ">
    <property type="method" value="X-ray"/>
    <property type="resolution" value="1.98 A"/>
    <property type="chains" value="A/B=5-298"/>
</dbReference>
<dbReference type="PDB" id="8OMK">
    <property type="method" value="X-ray"/>
    <property type="resolution" value="2.48 A"/>
    <property type="chains" value="A/B=5-298"/>
</dbReference>
<dbReference type="PDB" id="8UG1">
    <property type="method" value="X-ray"/>
    <property type="resolution" value="1.99 A"/>
    <property type="chains" value="A/B=5-298"/>
</dbReference>
<dbReference type="PDB" id="8UG3">
    <property type="method" value="X-ray"/>
    <property type="resolution" value="2.02 A"/>
    <property type="chains" value="A/B=5-298"/>
</dbReference>
<dbReference type="PDB" id="9FHD">
    <property type="method" value="X-ray"/>
    <property type="resolution" value="1.84 A"/>
    <property type="chains" value="A/B=5-298"/>
</dbReference>
<dbReference type="PDB" id="9FHE">
    <property type="method" value="X-ray"/>
    <property type="resolution" value="2.31 A"/>
    <property type="chains" value="A/B=5-298"/>
</dbReference>
<dbReference type="PDBsum" id="2HLZ"/>
<dbReference type="PDBsum" id="2HQQ"/>
<dbReference type="PDBsum" id="2HW1"/>
<dbReference type="PDBsum" id="3B3L"/>
<dbReference type="PDBsum" id="3NBV"/>
<dbReference type="PDBsum" id="3NBW"/>
<dbReference type="PDBsum" id="3NC2"/>
<dbReference type="PDBsum" id="3NC9"/>
<dbReference type="PDBsum" id="3NCA"/>
<dbReference type="PDBsum" id="3Q92"/>
<dbReference type="PDBsum" id="3QA2"/>
<dbReference type="PDBsum" id="3QAI"/>
<dbReference type="PDBsum" id="3RO4"/>
<dbReference type="PDBsum" id="5WBM"/>
<dbReference type="PDBsum" id="5WBO"/>
<dbReference type="PDBsum" id="5WBP"/>
<dbReference type="PDBsum" id="5WBQ"/>
<dbReference type="PDBsum" id="5WBR"/>
<dbReference type="PDBsum" id="5WBZ"/>
<dbReference type="PDBsum" id="6UL7"/>
<dbReference type="PDBsum" id="6W0N"/>
<dbReference type="PDBsum" id="6W0W"/>
<dbReference type="PDBsum" id="6W0X"/>
<dbReference type="PDBsum" id="6W0Y"/>
<dbReference type="PDBsum" id="6W0Z"/>
<dbReference type="PDBsum" id="8OME"/>
<dbReference type="PDBsum" id="8OMF"/>
<dbReference type="PDBsum" id="8OMJ"/>
<dbReference type="PDBsum" id="8OMK"/>
<dbReference type="PDBsum" id="8UG1"/>
<dbReference type="PDBsum" id="8UG3"/>
<dbReference type="PDBsum" id="9FHD"/>
<dbReference type="PDBsum" id="9FHE"/>
<dbReference type="SMR" id="P50053"/>
<dbReference type="BioGRID" id="109996">
    <property type="interactions" value="26"/>
</dbReference>
<dbReference type="DIP" id="DIP-50184N"/>
<dbReference type="FunCoup" id="P50053">
    <property type="interactions" value="263"/>
</dbReference>
<dbReference type="IntAct" id="P50053">
    <property type="interactions" value="10"/>
</dbReference>
<dbReference type="STRING" id="9606.ENSP00000260599"/>
<dbReference type="BindingDB" id="P50053"/>
<dbReference type="ChEMBL" id="CHEMBL1275212"/>
<dbReference type="GuidetoPHARMACOLOGY" id="3236"/>
<dbReference type="GlyGen" id="P50053">
    <property type="glycosylation" value="1 site, 4 N-linked glycans (1 site)"/>
</dbReference>
<dbReference type="iPTMnet" id="P50053"/>
<dbReference type="PhosphoSitePlus" id="P50053"/>
<dbReference type="BioMuta" id="KHK"/>
<dbReference type="DMDM" id="1730044"/>
<dbReference type="REPRODUCTION-2DPAGE" id="IPI00029488"/>
<dbReference type="jPOST" id="P50053"/>
<dbReference type="MassIVE" id="P50053"/>
<dbReference type="PaxDb" id="9606-ENSP00000260599"/>
<dbReference type="PeptideAtlas" id="P50053"/>
<dbReference type="ProteomicsDB" id="56192">
    <molecule id="P50053-1"/>
</dbReference>
<dbReference type="ProteomicsDB" id="56193">
    <molecule id="P50053-2"/>
</dbReference>
<dbReference type="Pumba" id="P50053"/>
<dbReference type="Antibodypedia" id="2054">
    <property type="antibodies" value="509 antibodies from 33 providers"/>
</dbReference>
<dbReference type="DNASU" id="3795"/>
<dbReference type="Ensembl" id="ENST00000260598.10">
    <molecule id="P50053-1"/>
    <property type="protein sequence ID" value="ENSP00000260598.5"/>
    <property type="gene ID" value="ENSG00000138030.14"/>
</dbReference>
<dbReference type="Ensembl" id="ENST00000260599.11">
    <molecule id="P50053-2"/>
    <property type="protein sequence ID" value="ENSP00000260599.6"/>
    <property type="gene ID" value="ENSG00000138030.14"/>
</dbReference>
<dbReference type="GeneID" id="3795"/>
<dbReference type="KEGG" id="hsa:3795"/>
<dbReference type="MANE-Select" id="ENST00000260598.10">
    <property type="protein sequence ID" value="ENSP00000260598.5"/>
    <property type="RefSeq nucleotide sequence ID" value="NM_006488.3"/>
    <property type="RefSeq protein sequence ID" value="NP_006479.1"/>
</dbReference>
<dbReference type="UCSC" id="uc002ril.3">
    <molecule id="P50053-1"/>
    <property type="organism name" value="human"/>
</dbReference>
<dbReference type="AGR" id="HGNC:6315"/>
<dbReference type="CTD" id="3795"/>
<dbReference type="DisGeNET" id="3795"/>
<dbReference type="GeneCards" id="KHK"/>
<dbReference type="HGNC" id="HGNC:6315">
    <property type="gene designation" value="KHK"/>
</dbReference>
<dbReference type="HPA" id="ENSG00000138030">
    <property type="expression patterns" value="Group enriched (intestine, kidney, liver)"/>
</dbReference>
<dbReference type="MalaCards" id="KHK"/>
<dbReference type="MIM" id="229800">
    <property type="type" value="phenotype"/>
</dbReference>
<dbReference type="MIM" id="614058">
    <property type="type" value="gene"/>
</dbReference>
<dbReference type="neXtProt" id="NX_P50053"/>
<dbReference type="OpenTargets" id="ENSG00000138030"/>
<dbReference type="Orphanet" id="2056">
    <property type="disease" value="Essential fructosuria"/>
</dbReference>
<dbReference type="PharmGKB" id="PA30095"/>
<dbReference type="VEuPathDB" id="HostDB:ENSG00000138030"/>
<dbReference type="eggNOG" id="KOG2947">
    <property type="taxonomic scope" value="Eukaryota"/>
</dbReference>
<dbReference type="GeneTree" id="ENSGT00390000007458"/>
<dbReference type="HOGENOM" id="CLU_027634_3_0_1"/>
<dbReference type="InParanoid" id="P50053"/>
<dbReference type="OMA" id="MSGRLIM"/>
<dbReference type="OrthoDB" id="204058at2759"/>
<dbReference type="PAN-GO" id="P50053">
    <property type="GO annotations" value="9 GO annotations based on evolutionary models"/>
</dbReference>
<dbReference type="TreeFam" id="TF323942"/>
<dbReference type="BioCyc" id="MetaCyc:HS06437-MONOMER"/>
<dbReference type="BRENDA" id="2.7.1.3">
    <property type="organism ID" value="2681"/>
</dbReference>
<dbReference type="PathwayCommons" id="P50053"/>
<dbReference type="Reactome" id="R-HSA-5657562">
    <property type="pathway name" value="Essential fructosuria"/>
</dbReference>
<dbReference type="Reactome" id="R-HSA-70350">
    <property type="pathway name" value="Fructose catabolism"/>
</dbReference>
<dbReference type="SABIO-RK" id="P50053"/>
<dbReference type="SignaLink" id="P50053"/>
<dbReference type="SIGNOR" id="P50053"/>
<dbReference type="UniPathway" id="UPA00202"/>
<dbReference type="BioGRID-ORCS" id="3795">
    <property type="hits" value="13 hits in 1155 CRISPR screens"/>
</dbReference>
<dbReference type="EvolutionaryTrace" id="P50053"/>
<dbReference type="GenomeRNAi" id="3795"/>
<dbReference type="Pharos" id="P50053">
    <property type="development level" value="Tchem"/>
</dbReference>
<dbReference type="PRO" id="PR:P50053"/>
<dbReference type="Proteomes" id="UP000005640">
    <property type="component" value="Chromosome 2"/>
</dbReference>
<dbReference type="RNAct" id="P50053">
    <property type="molecule type" value="protein"/>
</dbReference>
<dbReference type="Bgee" id="ENSG00000138030">
    <property type="expression patterns" value="Expressed in right lobe of liver and 141 other cell types or tissues"/>
</dbReference>
<dbReference type="ExpressionAtlas" id="P50053">
    <property type="expression patterns" value="baseline and differential"/>
</dbReference>
<dbReference type="GO" id="GO:0005737">
    <property type="term" value="C:cytoplasm"/>
    <property type="evidence" value="ECO:0000314"/>
    <property type="project" value="LIFEdb"/>
</dbReference>
<dbReference type="GO" id="GO:0005829">
    <property type="term" value="C:cytosol"/>
    <property type="evidence" value="ECO:0000304"/>
    <property type="project" value="Reactome"/>
</dbReference>
<dbReference type="GO" id="GO:0070062">
    <property type="term" value="C:extracellular exosome"/>
    <property type="evidence" value="ECO:0007005"/>
    <property type="project" value="UniProtKB"/>
</dbReference>
<dbReference type="GO" id="GO:0005524">
    <property type="term" value="F:ATP binding"/>
    <property type="evidence" value="ECO:0000314"/>
    <property type="project" value="UniProtKB"/>
</dbReference>
<dbReference type="GO" id="GO:0070061">
    <property type="term" value="F:fructose binding"/>
    <property type="evidence" value="ECO:0000314"/>
    <property type="project" value="UniProtKB"/>
</dbReference>
<dbReference type="GO" id="GO:0042802">
    <property type="term" value="F:identical protein binding"/>
    <property type="evidence" value="ECO:0000314"/>
    <property type="project" value="UniProtKB"/>
</dbReference>
<dbReference type="GO" id="GO:0004454">
    <property type="term" value="F:ketohexokinase activity"/>
    <property type="evidence" value="ECO:0000314"/>
    <property type="project" value="MGI"/>
</dbReference>
<dbReference type="GO" id="GO:0042803">
    <property type="term" value="F:protein homodimerization activity"/>
    <property type="evidence" value="ECO:0000314"/>
    <property type="project" value="UniProtKB"/>
</dbReference>
<dbReference type="GO" id="GO:0006000">
    <property type="term" value="P:fructose metabolic process"/>
    <property type="evidence" value="ECO:0000314"/>
    <property type="project" value="UniProtKB"/>
</dbReference>
<dbReference type="GO" id="GO:0070873">
    <property type="term" value="P:regulation of glycogen metabolic process"/>
    <property type="evidence" value="ECO:0000318"/>
    <property type="project" value="GO_Central"/>
</dbReference>
<dbReference type="GO" id="GO:0009750">
    <property type="term" value="P:response to fructose"/>
    <property type="evidence" value="ECO:0000318"/>
    <property type="project" value="GO_Central"/>
</dbReference>
<dbReference type="GO" id="GO:0009749">
    <property type="term" value="P:response to glucose"/>
    <property type="evidence" value="ECO:0000318"/>
    <property type="project" value="GO_Central"/>
</dbReference>
<dbReference type="GO" id="GO:0032868">
    <property type="term" value="P:response to insulin"/>
    <property type="evidence" value="ECO:0000318"/>
    <property type="project" value="GO_Central"/>
</dbReference>
<dbReference type="GO" id="GO:0009744">
    <property type="term" value="P:response to sucrose"/>
    <property type="evidence" value="ECO:0000318"/>
    <property type="project" value="GO_Central"/>
</dbReference>
<dbReference type="GO" id="GO:0010043">
    <property type="term" value="P:response to zinc ion"/>
    <property type="evidence" value="ECO:0000318"/>
    <property type="project" value="GO_Central"/>
</dbReference>
<dbReference type="CDD" id="cd01939">
    <property type="entry name" value="Ketohexokinase"/>
    <property type="match status" value="1"/>
</dbReference>
<dbReference type="FunFam" id="3.40.1190.20:FF:000018">
    <property type="entry name" value="Ketohexokinase"/>
    <property type="match status" value="1"/>
</dbReference>
<dbReference type="Gene3D" id="3.40.1190.20">
    <property type="match status" value="1"/>
</dbReference>
<dbReference type="InterPro" id="IPR052562">
    <property type="entry name" value="Ketohexokinase-related"/>
</dbReference>
<dbReference type="InterPro" id="IPR034093">
    <property type="entry name" value="KHK"/>
</dbReference>
<dbReference type="InterPro" id="IPR011611">
    <property type="entry name" value="PfkB_dom"/>
</dbReference>
<dbReference type="InterPro" id="IPR029056">
    <property type="entry name" value="Ribokinase-like"/>
</dbReference>
<dbReference type="PANTHER" id="PTHR42774:SF3">
    <property type="entry name" value="KETOHEXOKINASE"/>
    <property type="match status" value="1"/>
</dbReference>
<dbReference type="PANTHER" id="PTHR42774">
    <property type="entry name" value="PHOSPHOTRANSFERASE SYSTEM TRANSPORT PROTEIN"/>
    <property type="match status" value="1"/>
</dbReference>
<dbReference type="Pfam" id="PF00294">
    <property type="entry name" value="PfkB"/>
    <property type="match status" value="1"/>
</dbReference>
<dbReference type="SUPFAM" id="SSF53613">
    <property type="entry name" value="Ribokinase-like"/>
    <property type="match status" value="1"/>
</dbReference>
<gene>
    <name evidence="7" type="primary">KHK</name>
</gene>
<sequence>MEEKQILCVGLVVLDVISLVDKYPKEDSEIRCLSQRWQRGGNASNSCTVLSLLGAPCAFMGSMAPGHVADFLVADFRRRGVDVSQVAWQSKGDTPSSCCIINNSNGNRTIVLHDTSLPDVSATDFEKVDLTQFKWIHIEGRNASEQVKMLQRIDAHNTRQPPEQKIRVSVEVEKPREELFQLFGYGDVVFVSKDVAKHLGFQSAEEALRGLYGRVRKGAVLVCAWAEEGADALGPDGKLLHSDAFPPPRVVDTLGAGDTFNASVIFSLSQGRSVQEALRFGCQVAGKKCGLQGFDGIV</sequence>
<comment type="function">
    <text evidence="1">Catalyzes the phosphorylation of the ketose sugar fructose to fructose-1-phosphate.</text>
</comment>
<comment type="catalytic activity">
    <reaction evidence="1">
        <text>beta-D-fructose + ATP = beta-D-fructose 1-phosphate + ADP + H(+)</text>
        <dbReference type="Rhea" id="RHEA:18145"/>
        <dbReference type="ChEBI" id="CHEBI:15378"/>
        <dbReference type="ChEBI" id="CHEBI:28645"/>
        <dbReference type="ChEBI" id="CHEBI:30616"/>
        <dbReference type="ChEBI" id="CHEBI:138881"/>
        <dbReference type="ChEBI" id="CHEBI:456216"/>
        <dbReference type="EC" id="2.7.1.3"/>
    </reaction>
</comment>
<comment type="activity regulation">
    <text>Requires potassium. Inhibition by ADP.</text>
</comment>
<comment type="biophysicochemical properties">
    <kinetics>
        <KM evidence="1">0.8 mM for D-fructose (at 25 degrees Celsius)</KM>
        <KM evidence="1">0.15 mM for Mg-ATP (at 25 degrees Celsius)</KM>
        <text evidence="1">kcat is 7.6 sec(-1).</text>
    </kinetics>
</comment>
<comment type="pathway">
    <text>Carbohydrate metabolism; fructose metabolism.</text>
</comment>
<comment type="subunit">
    <text evidence="2">Homodimer.</text>
</comment>
<comment type="interaction">
    <interactant intactId="EBI-1053974">
        <id>P50053</id>
    </interactant>
    <interactant intactId="EBI-10175218">
        <id>Q9NQ69</id>
        <label>LHX9</label>
    </interactant>
    <organismsDiffer>false</organismsDiffer>
    <experiments>3</experiments>
</comment>
<comment type="interaction">
    <interactant intactId="EBI-12204387">
        <id>P50053-2</id>
    </interactant>
    <interactant intactId="EBI-743771">
        <id>Q92624</id>
        <label>APPBP2</label>
    </interactant>
    <organismsDiffer>false</organismsDiffer>
    <experiments>3</experiments>
</comment>
<comment type="interaction">
    <interactant intactId="EBI-12204387">
        <id>P50053-2</id>
    </interactant>
    <interactant intactId="EBI-12179869">
        <id>P50458</id>
        <label>LHX2</label>
    </interactant>
    <organismsDiffer>false</organismsDiffer>
    <experiments>3</experiments>
</comment>
<comment type="interaction">
    <interactant intactId="EBI-12204387">
        <id>P50053-2</id>
    </interactant>
    <interactant intactId="EBI-10175218">
        <id>Q9NQ69</id>
        <label>LHX9</label>
    </interactant>
    <organismsDiffer>false</organismsDiffer>
    <experiments>3</experiments>
</comment>
<comment type="interaction">
    <interactant intactId="EBI-12204387">
        <id>P50053-2</id>
    </interactant>
    <interactant intactId="EBI-16205225">
        <id>P60891-1</id>
        <label>PRPS1</label>
    </interactant>
    <organismsDiffer>false</organismsDiffer>
    <experiments>4</experiments>
</comment>
<comment type="alternative products">
    <event type="alternative splicing"/>
    <isoform>
        <id>P50053-1</id>
        <name evidence="4">C</name>
        <name>Central</name>
        <name evidence="4">hepatic/renal/intestinal</name>
        <sequence type="displayed"/>
    </isoform>
    <isoform>
        <id>P50053-2</id>
        <name evidence="4">A</name>
        <name evidence="4">Peripheral</name>
        <sequence type="described" ref="VSP_004669"/>
    </isoform>
</comment>
<comment type="tissue specificity">
    <text evidence="4">Most abundant in liver, kidney, gut, spleen and pancreas. Low levels also found in adrenal, muscle, brain and eye.</text>
</comment>
<comment type="disease" evidence="1 3">
    <disease id="DI-01635">
        <name>Fructosuria</name>
        <acronym>FRUCT</acronym>
        <description>Benign defect of intermediary metabolism.</description>
        <dbReference type="MIM" id="229800"/>
    </disease>
    <text>The disease is caused by variants affecting the gene represented in this entry.</text>
</comment>
<comment type="miscellaneous">
    <molecule>Isoform A</molecule>
    <text evidence="1">More widely distributed but with a low expression level. KM=7 mM for D-fructose (at 25 degrees Celsius). KM=036 mM for Mg-ATP (at 25 degrees Celsius). kcat is 6.9 sec(-1).</text>
</comment>
<comment type="similarity">
    <text evidence="5">Belongs to the carbohydrate kinase PfkB family.</text>
</comment>